<name>THIC_CHLP8</name>
<dbReference type="EC" id="4.1.99.17" evidence="1"/>
<dbReference type="EMBL" id="CP001099">
    <property type="protein sequence ID" value="ACF11938.1"/>
    <property type="molecule type" value="Genomic_DNA"/>
</dbReference>
<dbReference type="RefSeq" id="WP_012502771.1">
    <property type="nucleotide sequence ID" value="NC_011027.1"/>
</dbReference>
<dbReference type="SMR" id="B3QPT5"/>
<dbReference type="STRING" id="517417.Cpar_1540"/>
<dbReference type="KEGG" id="cpc:Cpar_1540"/>
<dbReference type="eggNOG" id="COG0422">
    <property type="taxonomic scope" value="Bacteria"/>
</dbReference>
<dbReference type="HOGENOM" id="CLU_013181_2_1_10"/>
<dbReference type="OrthoDB" id="9805897at2"/>
<dbReference type="UniPathway" id="UPA00060"/>
<dbReference type="Proteomes" id="UP000008811">
    <property type="component" value="Chromosome"/>
</dbReference>
<dbReference type="GO" id="GO:0005829">
    <property type="term" value="C:cytosol"/>
    <property type="evidence" value="ECO:0007669"/>
    <property type="project" value="TreeGrafter"/>
</dbReference>
<dbReference type="GO" id="GO:0051539">
    <property type="term" value="F:4 iron, 4 sulfur cluster binding"/>
    <property type="evidence" value="ECO:0007669"/>
    <property type="project" value="UniProtKB-KW"/>
</dbReference>
<dbReference type="GO" id="GO:0016830">
    <property type="term" value="F:carbon-carbon lyase activity"/>
    <property type="evidence" value="ECO:0007669"/>
    <property type="project" value="InterPro"/>
</dbReference>
<dbReference type="GO" id="GO:0008270">
    <property type="term" value="F:zinc ion binding"/>
    <property type="evidence" value="ECO:0007669"/>
    <property type="project" value="UniProtKB-UniRule"/>
</dbReference>
<dbReference type="GO" id="GO:0009228">
    <property type="term" value="P:thiamine biosynthetic process"/>
    <property type="evidence" value="ECO:0007669"/>
    <property type="project" value="UniProtKB-KW"/>
</dbReference>
<dbReference type="GO" id="GO:0009229">
    <property type="term" value="P:thiamine diphosphate biosynthetic process"/>
    <property type="evidence" value="ECO:0007669"/>
    <property type="project" value="UniProtKB-UniRule"/>
</dbReference>
<dbReference type="FunFam" id="3.20.20.540:FF:000001">
    <property type="entry name" value="Phosphomethylpyrimidine synthase"/>
    <property type="match status" value="1"/>
</dbReference>
<dbReference type="Gene3D" id="6.10.250.620">
    <property type="match status" value="1"/>
</dbReference>
<dbReference type="Gene3D" id="3.20.20.540">
    <property type="entry name" value="Radical SAM ThiC family, central domain"/>
    <property type="match status" value="1"/>
</dbReference>
<dbReference type="HAMAP" id="MF_00089">
    <property type="entry name" value="ThiC"/>
    <property type="match status" value="1"/>
</dbReference>
<dbReference type="InterPro" id="IPR037509">
    <property type="entry name" value="ThiC"/>
</dbReference>
<dbReference type="InterPro" id="IPR025747">
    <property type="entry name" value="ThiC-associated_dom"/>
</dbReference>
<dbReference type="InterPro" id="IPR038521">
    <property type="entry name" value="ThiC/Bza_core_dom"/>
</dbReference>
<dbReference type="InterPro" id="IPR002817">
    <property type="entry name" value="ThiC/BzaA/B"/>
</dbReference>
<dbReference type="NCBIfam" id="NF006763">
    <property type="entry name" value="PRK09284.1"/>
    <property type="match status" value="1"/>
</dbReference>
<dbReference type="NCBIfam" id="NF009895">
    <property type="entry name" value="PRK13352.1"/>
    <property type="match status" value="1"/>
</dbReference>
<dbReference type="NCBIfam" id="TIGR00190">
    <property type="entry name" value="thiC"/>
    <property type="match status" value="1"/>
</dbReference>
<dbReference type="PANTHER" id="PTHR30557:SF1">
    <property type="entry name" value="PHOSPHOMETHYLPYRIMIDINE SYNTHASE, CHLOROPLASTIC"/>
    <property type="match status" value="1"/>
</dbReference>
<dbReference type="PANTHER" id="PTHR30557">
    <property type="entry name" value="THIAMINE BIOSYNTHESIS PROTEIN THIC"/>
    <property type="match status" value="1"/>
</dbReference>
<dbReference type="Pfam" id="PF13667">
    <property type="entry name" value="ThiC-associated"/>
    <property type="match status" value="1"/>
</dbReference>
<dbReference type="Pfam" id="PF01964">
    <property type="entry name" value="ThiC_Rad_SAM"/>
    <property type="match status" value="1"/>
</dbReference>
<dbReference type="SFLD" id="SFLDF00407">
    <property type="entry name" value="phosphomethylpyrimidine_syntha"/>
    <property type="match status" value="1"/>
</dbReference>
<dbReference type="SFLD" id="SFLDG01114">
    <property type="entry name" value="phosphomethylpyrimidine_syntha"/>
    <property type="match status" value="1"/>
</dbReference>
<dbReference type="SFLD" id="SFLDS00113">
    <property type="entry name" value="Radical_SAM_Phosphomethylpyrim"/>
    <property type="match status" value="1"/>
</dbReference>
<reference key="1">
    <citation type="submission" date="2008-06" db="EMBL/GenBank/DDBJ databases">
        <title>Complete sequence of Chlorobaculum parvum NCIB 8327.</title>
        <authorList>
            <consortium name="US DOE Joint Genome Institute"/>
            <person name="Lucas S."/>
            <person name="Copeland A."/>
            <person name="Lapidus A."/>
            <person name="Glavina del Rio T."/>
            <person name="Dalin E."/>
            <person name="Tice H."/>
            <person name="Bruce D."/>
            <person name="Goodwin L."/>
            <person name="Pitluck S."/>
            <person name="Schmutz J."/>
            <person name="Larimer F."/>
            <person name="Land M."/>
            <person name="Hauser L."/>
            <person name="Kyrpides N."/>
            <person name="Mikhailova N."/>
            <person name="Zhao F."/>
            <person name="Li T."/>
            <person name="Liu Z."/>
            <person name="Overmann J."/>
            <person name="Bryant D.A."/>
            <person name="Richardson P."/>
        </authorList>
    </citation>
    <scope>NUCLEOTIDE SEQUENCE [LARGE SCALE GENOMIC DNA]</scope>
    <source>
        <strain>DSM 263 / NCIMB 8327</strain>
    </source>
</reference>
<organism>
    <name type="scientific">Chlorobaculum parvum (strain DSM 263 / NCIMB 8327)</name>
    <name type="common">Chlorobium vibrioforme subsp. thiosulfatophilum</name>
    <dbReference type="NCBI Taxonomy" id="517417"/>
    <lineage>
        <taxon>Bacteria</taxon>
        <taxon>Pseudomonadati</taxon>
        <taxon>Chlorobiota</taxon>
        <taxon>Chlorobiia</taxon>
        <taxon>Chlorobiales</taxon>
        <taxon>Chlorobiaceae</taxon>
        <taxon>Chlorobaculum</taxon>
    </lineage>
</organism>
<proteinExistence type="inferred from homology"/>
<accession>B3QPT5</accession>
<protein>
    <recommendedName>
        <fullName evidence="1">Phosphomethylpyrimidine synthase</fullName>
        <ecNumber evidence="1">4.1.99.17</ecNumber>
    </recommendedName>
    <alternativeName>
        <fullName evidence="1">Hydroxymethylpyrimidine phosphate synthase</fullName>
        <shortName evidence="1">HMP-P synthase</shortName>
        <shortName evidence="1">HMP-phosphate synthase</shortName>
        <shortName evidence="1">HMPP synthase</shortName>
    </alternativeName>
    <alternativeName>
        <fullName evidence="1">Thiamine biosynthesis protein ThiC</fullName>
    </alternativeName>
</protein>
<sequence>MNPESASCPDRHFFGPASSRMTVNGTIYPIEVGMRKVALKRTYECKGEPFNSMPLYDTSGPFGDPNGEHDVRKGLEPVRDRWGFDNGSAESTKGELSMSERKPRVAKSGEAVTQMHFARKGVITPEMEYVAIRENQALEEWIEKCGGKPVTPEMVRDEVAKGRAIIPANINHPEIEPMIIGRNFRVKINANIGNSALGSSIDEEVEKAVWACRWGADTVMDLSTGKNIHQTREWILRNSPVPIGTVPLYQALEKVGGKAEELSWEVYRDTLVEQAEQGVDYFTIHSGILAATLPDAEARQTGIVSRGGSIMARWCRAHNQENFLFTHFDDICDILRSYDVAVSLGDALRPGSIGDANDAAQFGELKTLGELTLRAWERDVQVMIEGPGHVPLHMIRENMELQLKHCHEAPFYTLGPLVTDVAAGYDHINSAIGGTLIASLGCSMLCYVTPKEHLGLPDRDDVREGVIVHRVAAHAADLAKGSHTAWLRDELMSKARYAFEWEDQFSLALDPLKTRQIHAQNIAATGDTAATAKFCTMCGPDFCSMKRSQETTAGM</sequence>
<feature type="chain" id="PRO_1000093199" description="Phosphomethylpyrimidine synthase">
    <location>
        <begin position="1"/>
        <end position="555"/>
    </location>
</feature>
<feature type="region of interest" description="Disordered" evidence="2">
    <location>
        <begin position="78"/>
        <end position="104"/>
    </location>
</feature>
<feature type="binding site" evidence="1">
    <location>
        <position position="191"/>
    </location>
    <ligand>
        <name>substrate</name>
    </ligand>
</feature>
<feature type="binding site" evidence="1">
    <location>
        <position position="220"/>
    </location>
    <ligand>
        <name>substrate</name>
    </ligand>
</feature>
<feature type="binding site" evidence="1">
    <location>
        <position position="249"/>
    </location>
    <ligand>
        <name>substrate</name>
    </ligand>
</feature>
<feature type="binding site" evidence="1">
    <location>
        <position position="285"/>
    </location>
    <ligand>
        <name>substrate</name>
    </ligand>
</feature>
<feature type="binding site" evidence="1">
    <location>
        <begin position="305"/>
        <end position="307"/>
    </location>
    <ligand>
        <name>substrate</name>
    </ligand>
</feature>
<feature type="binding site" evidence="1">
    <location>
        <begin position="346"/>
        <end position="349"/>
    </location>
    <ligand>
        <name>substrate</name>
    </ligand>
</feature>
<feature type="binding site" evidence="1">
    <location>
        <position position="385"/>
    </location>
    <ligand>
        <name>substrate</name>
    </ligand>
</feature>
<feature type="binding site" evidence="1">
    <location>
        <position position="389"/>
    </location>
    <ligand>
        <name>Zn(2+)</name>
        <dbReference type="ChEBI" id="CHEBI:29105"/>
    </ligand>
</feature>
<feature type="binding site" evidence="1">
    <location>
        <position position="412"/>
    </location>
    <ligand>
        <name>substrate</name>
    </ligand>
</feature>
<feature type="binding site" evidence="1">
    <location>
        <position position="453"/>
    </location>
    <ligand>
        <name>Zn(2+)</name>
        <dbReference type="ChEBI" id="CHEBI:29105"/>
    </ligand>
</feature>
<feature type="binding site" evidence="1">
    <location>
        <position position="535"/>
    </location>
    <ligand>
        <name>[4Fe-4S] cluster</name>
        <dbReference type="ChEBI" id="CHEBI:49883"/>
        <note>4Fe-4S-S-AdoMet</note>
    </ligand>
</feature>
<feature type="binding site" evidence="1">
    <location>
        <position position="538"/>
    </location>
    <ligand>
        <name>[4Fe-4S] cluster</name>
        <dbReference type="ChEBI" id="CHEBI:49883"/>
        <note>4Fe-4S-S-AdoMet</note>
    </ligand>
</feature>
<feature type="binding site" evidence="1">
    <location>
        <position position="543"/>
    </location>
    <ligand>
        <name>[4Fe-4S] cluster</name>
        <dbReference type="ChEBI" id="CHEBI:49883"/>
        <note>4Fe-4S-S-AdoMet</note>
    </ligand>
</feature>
<gene>
    <name evidence="1" type="primary">thiC</name>
    <name type="ordered locus">Cpar_1540</name>
</gene>
<evidence type="ECO:0000255" key="1">
    <source>
        <dbReference type="HAMAP-Rule" id="MF_00089"/>
    </source>
</evidence>
<evidence type="ECO:0000256" key="2">
    <source>
        <dbReference type="SAM" id="MobiDB-lite"/>
    </source>
</evidence>
<keyword id="KW-0004">4Fe-4S</keyword>
<keyword id="KW-0408">Iron</keyword>
<keyword id="KW-0411">Iron-sulfur</keyword>
<keyword id="KW-0456">Lyase</keyword>
<keyword id="KW-0479">Metal-binding</keyword>
<keyword id="KW-0949">S-adenosyl-L-methionine</keyword>
<keyword id="KW-0784">Thiamine biosynthesis</keyword>
<keyword id="KW-0862">Zinc</keyword>
<comment type="function">
    <text evidence="1">Catalyzes the synthesis of the hydroxymethylpyrimidine phosphate (HMP-P) moiety of thiamine from aminoimidazole ribotide (AIR) in a radical S-adenosyl-L-methionine (SAM)-dependent reaction.</text>
</comment>
<comment type="catalytic activity">
    <reaction evidence="1">
        <text>5-amino-1-(5-phospho-beta-D-ribosyl)imidazole + S-adenosyl-L-methionine = 4-amino-2-methyl-5-(phosphooxymethyl)pyrimidine + CO + 5'-deoxyadenosine + formate + L-methionine + 3 H(+)</text>
        <dbReference type="Rhea" id="RHEA:24840"/>
        <dbReference type="ChEBI" id="CHEBI:15378"/>
        <dbReference type="ChEBI" id="CHEBI:15740"/>
        <dbReference type="ChEBI" id="CHEBI:17245"/>
        <dbReference type="ChEBI" id="CHEBI:17319"/>
        <dbReference type="ChEBI" id="CHEBI:57844"/>
        <dbReference type="ChEBI" id="CHEBI:58354"/>
        <dbReference type="ChEBI" id="CHEBI:59789"/>
        <dbReference type="ChEBI" id="CHEBI:137981"/>
        <dbReference type="EC" id="4.1.99.17"/>
    </reaction>
</comment>
<comment type="cofactor">
    <cofactor evidence="1">
        <name>[4Fe-4S] cluster</name>
        <dbReference type="ChEBI" id="CHEBI:49883"/>
    </cofactor>
    <text evidence="1">Binds 1 [4Fe-4S] cluster per subunit. The cluster is coordinated with 3 cysteines and an exchangeable S-adenosyl-L-methionine.</text>
</comment>
<comment type="pathway">
    <text evidence="1">Cofactor biosynthesis; thiamine diphosphate biosynthesis.</text>
</comment>
<comment type="similarity">
    <text evidence="1">Belongs to the ThiC family.</text>
</comment>